<organism>
    <name type="scientific">Microplitis demolitor bracovirus (isolate Webb)</name>
    <name type="common">MdBV</name>
    <dbReference type="NCBI Taxonomy" id="654919"/>
    <lineage>
        <taxon>Viruses</taxon>
        <taxon>Viruses incertae sedis</taxon>
        <taxon>Polydnaviriformidae</taxon>
        <taxon>Bracoviriform</taxon>
        <taxon>Microplitis demolitor bracovirus</taxon>
    </lineage>
</organism>
<keyword id="KW-1185">Reference proteome</keyword>
<reference key="1">
    <citation type="journal article" date="2006" name="Virology">
        <title>Polydnavirus genomes reflect their dual roles as mutualists and pathogens.</title>
        <authorList>
            <person name="Webb B.A."/>
            <person name="Strand M.R."/>
            <person name="Dickey S.E."/>
            <person name="Beck M.H."/>
            <person name="Hilgarth R.S."/>
            <person name="Barney W.E."/>
            <person name="Kadash K."/>
            <person name="Kroemer J.A."/>
            <person name="Lindstrom K.G."/>
            <person name="Rattanadechakul W."/>
            <person name="Shelby K.S."/>
            <person name="Thoetkiattikul H."/>
            <person name="Turnbull M.W."/>
            <person name="Witherell R.A."/>
        </authorList>
    </citation>
    <scope>NUCLEOTIDE SEQUENCE [GENOMIC DNA]</scope>
</reference>
<protein>
    <recommendedName>
        <fullName>Uncharacterized protein I2</fullName>
    </recommendedName>
</protein>
<feature type="chain" id="PRO_0000405383" description="Uncharacterized protein I2">
    <location>
        <begin position="1"/>
        <end position="109"/>
    </location>
</feature>
<accession>Q5EFR0</accession>
<sequence length="109" mass="12541">MSIKIIVPREWKSFPDLQLGWELHRIISLRQSQVQTATGVEASFNGVMAVCTEYSFYLWFRKTDDTNIIPDSKYSLISTQFFESPVSPLENIAYSPKYSTNESCSDKEC</sequence>
<gene>
    <name type="primary">I2</name>
</gene>
<name>YI2_MDBVW</name>
<organismHost>
    <name type="scientific">Microplitis demolitor</name>
    <name type="common">Parasitoid wasp</name>
    <dbReference type="NCBI Taxonomy" id="69319"/>
</organismHost>
<dbReference type="EMBL" id="AY887894">
    <property type="protein sequence ID" value="AAW77934.1"/>
    <property type="molecule type" value="Genomic_DNA"/>
</dbReference>
<dbReference type="RefSeq" id="YP_239407.1">
    <property type="nucleotide sequence ID" value="NC_007041.1"/>
</dbReference>
<dbReference type="KEGG" id="vg:5075841"/>
<dbReference type="Proteomes" id="UP000008168">
    <property type="component" value="Genome"/>
</dbReference>
<proteinExistence type="predicted"/>